<organism>
    <name type="scientific">Dictyostelium discoideum</name>
    <name type="common">Social amoeba</name>
    <dbReference type="NCBI Taxonomy" id="44689"/>
    <lineage>
        <taxon>Eukaryota</taxon>
        <taxon>Amoebozoa</taxon>
        <taxon>Evosea</taxon>
        <taxon>Eumycetozoa</taxon>
        <taxon>Dictyostelia</taxon>
        <taxon>Dictyosteliales</taxon>
        <taxon>Dictyosteliaceae</taxon>
        <taxon>Dictyostelium</taxon>
    </lineage>
</organism>
<name>PLBLA_DICDI</name>
<accession>Q550U9</accession>
<accession>Q8MWQ0</accession>
<reference key="1">
    <citation type="journal article" date="2004" name="Biochem. J.">
        <title>Identification of phospholipase B from Dictyostelium discoideum reveals a new lipase family present in mammals, flies and nematodes, but not yeast.</title>
        <authorList>
            <person name="Morgan C.P."/>
            <person name="Insall R."/>
            <person name="Haynes L."/>
            <person name="Cockcroft S."/>
        </authorList>
    </citation>
    <scope>NUCLEOTIDE SEQUENCE [MRNA]</scope>
    <scope>PROTEIN SEQUENCE OF 231-239; 433-437; 464-473 AND 501-512</scope>
    <scope>FUNCTION</scope>
    <scope>ENZYME ACTIVITY</scope>
    <source>
        <strain>AX3</strain>
    </source>
</reference>
<reference key="2">
    <citation type="journal article" date="2002" name="Nature">
        <title>Sequence and analysis of chromosome 2 of Dictyostelium discoideum.</title>
        <authorList>
            <person name="Gloeckner G."/>
            <person name="Eichinger L."/>
            <person name="Szafranski K."/>
            <person name="Pachebat J.A."/>
            <person name="Bankier A.T."/>
            <person name="Dear P.H."/>
            <person name="Lehmann R."/>
            <person name="Baumgart C."/>
            <person name="Parra G."/>
            <person name="Abril J.F."/>
            <person name="Guigo R."/>
            <person name="Kumpf K."/>
            <person name="Tunggal B."/>
            <person name="Cox E.C."/>
            <person name="Quail M.A."/>
            <person name="Platzer M."/>
            <person name="Rosenthal A."/>
            <person name="Noegel A.A."/>
        </authorList>
    </citation>
    <scope>NUCLEOTIDE SEQUENCE [LARGE SCALE GENOMIC DNA]</scope>
    <source>
        <strain>AX4</strain>
    </source>
</reference>
<reference key="3">
    <citation type="journal article" date="2005" name="Nature">
        <title>The genome of the social amoeba Dictyostelium discoideum.</title>
        <authorList>
            <person name="Eichinger L."/>
            <person name="Pachebat J.A."/>
            <person name="Gloeckner G."/>
            <person name="Rajandream M.A."/>
            <person name="Sucgang R."/>
            <person name="Berriman M."/>
            <person name="Song J."/>
            <person name="Olsen R."/>
            <person name="Szafranski K."/>
            <person name="Xu Q."/>
            <person name="Tunggal B."/>
            <person name="Kummerfeld S."/>
            <person name="Madera M."/>
            <person name="Konfortov B.A."/>
            <person name="Rivero F."/>
            <person name="Bankier A.T."/>
            <person name="Lehmann R."/>
            <person name="Hamlin N."/>
            <person name="Davies R."/>
            <person name="Gaudet P."/>
            <person name="Fey P."/>
            <person name="Pilcher K."/>
            <person name="Chen G."/>
            <person name="Saunders D."/>
            <person name="Sodergren E.J."/>
            <person name="Davis P."/>
            <person name="Kerhornou A."/>
            <person name="Nie X."/>
            <person name="Hall N."/>
            <person name="Anjard C."/>
            <person name="Hemphill L."/>
            <person name="Bason N."/>
            <person name="Farbrother P."/>
            <person name="Desany B."/>
            <person name="Just E."/>
            <person name="Morio T."/>
            <person name="Rost R."/>
            <person name="Churcher C.M."/>
            <person name="Cooper J."/>
            <person name="Haydock S."/>
            <person name="van Driessche N."/>
            <person name="Cronin A."/>
            <person name="Goodhead I."/>
            <person name="Muzny D.M."/>
            <person name="Mourier T."/>
            <person name="Pain A."/>
            <person name="Lu M."/>
            <person name="Harper D."/>
            <person name="Lindsay R."/>
            <person name="Hauser H."/>
            <person name="James K.D."/>
            <person name="Quiles M."/>
            <person name="Madan Babu M."/>
            <person name="Saito T."/>
            <person name="Buchrieser C."/>
            <person name="Wardroper A."/>
            <person name="Felder M."/>
            <person name="Thangavelu M."/>
            <person name="Johnson D."/>
            <person name="Knights A."/>
            <person name="Loulseged H."/>
            <person name="Mungall K.L."/>
            <person name="Oliver K."/>
            <person name="Price C."/>
            <person name="Quail M.A."/>
            <person name="Urushihara H."/>
            <person name="Hernandez J."/>
            <person name="Rabbinowitsch E."/>
            <person name="Steffen D."/>
            <person name="Sanders M."/>
            <person name="Ma J."/>
            <person name="Kohara Y."/>
            <person name="Sharp S."/>
            <person name="Simmonds M.N."/>
            <person name="Spiegler S."/>
            <person name="Tivey A."/>
            <person name="Sugano S."/>
            <person name="White B."/>
            <person name="Walker D."/>
            <person name="Woodward J.R."/>
            <person name="Winckler T."/>
            <person name="Tanaka Y."/>
            <person name="Shaulsky G."/>
            <person name="Schleicher M."/>
            <person name="Weinstock G.M."/>
            <person name="Rosenthal A."/>
            <person name="Cox E.C."/>
            <person name="Chisholm R.L."/>
            <person name="Gibbs R.A."/>
            <person name="Loomis W.F."/>
            <person name="Platzer M."/>
            <person name="Kay R.R."/>
            <person name="Williams J.G."/>
            <person name="Dear P.H."/>
            <person name="Noegel A.A."/>
            <person name="Barrell B.G."/>
            <person name="Kuspa A."/>
        </authorList>
    </citation>
    <scope>NUCLEOTIDE SEQUENCE [LARGE SCALE GENOMIC DNA]</scope>
    <source>
        <strain>AX4</strain>
    </source>
</reference>
<keyword id="KW-0903">Direct protein sequencing</keyword>
<keyword id="KW-0325">Glycoprotein</keyword>
<keyword id="KW-0378">Hydrolase</keyword>
<keyword id="KW-0442">Lipid degradation</keyword>
<keyword id="KW-0443">Lipid metabolism</keyword>
<keyword id="KW-1185">Reference proteome</keyword>
<keyword id="KW-0964">Secreted</keyword>
<keyword id="KW-0732">Signal</keyword>
<proteinExistence type="evidence at protein level"/>
<dbReference type="EC" id="3.1.1.-"/>
<dbReference type="EMBL" id="AF411829">
    <property type="protein sequence ID" value="AAN03644.1"/>
    <property type="molecule type" value="mRNA"/>
</dbReference>
<dbReference type="EMBL" id="AAFI02000019">
    <property type="protein sequence ID" value="EAL68885.1"/>
    <property type="molecule type" value="Genomic_DNA"/>
</dbReference>
<dbReference type="RefSeq" id="XP_642833.1">
    <property type="nucleotide sequence ID" value="XM_637741.1"/>
</dbReference>
<dbReference type="SMR" id="Q550U9"/>
<dbReference type="FunCoup" id="Q550U9">
    <property type="interactions" value="7"/>
</dbReference>
<dbReference type="STRING" id="44689.Q550U9"/>
<dbReference type="GlyCosmos" id="Q550U9">
    <property type="glycosylation" value="3 sites, No reported glycans"/>
</dbReference>
<dbReference type="GlyGen" id="Q550U9">
    <property type="glycosylation" value="3 sites"/>
</dbReference>
<dbReference type="PaxDb" id="44689-DDB0185225"/>
<dbReference type="EnsemblProtists" id="EAL68885">
    <property type="protein sequence ID" value="EAL68885"/>
    <property type="gene ID" value="DDB_G0276767"/>
</dbReference>
<dbReference type="GeneID" id="8620697"/>
<dbReference type="KEGG" id="ddi:DDB_G0276767"/>
<dbReference type="dictyBase" id="DDB_G0276767">
    <property type="gene designation" value="plbA"/>
</dbReference>
<dbReference type="VEuPathDB" id="AmoebaDB:DDB_G0276767"/>
<dbReference type="eggNOG" id="KOG3774">
    <property type="taxonomic scope" value="Eukaryota"/>
</dbReference>
<dbReference type="HOGENOM" id="CLU_027106_4_0_1"/>
<dbReference type="InParanoid" id="Q550U9"/>
<dbReference type="OMA" id="WSSYYEM"/>
<dbReference type="PhylomeDB" id="Q550U9"/>
<dbReference type="PRO" id="PR:Q550U9"/>
<dbReference type="Proteomes" id="UP000002195">
    <property type="component" value="Chromosome 2"/>
</dbReference>
<dbReference type="GO" id="GO:0005576">
    <property type="term" value="C:extracellular region"/>
    <property type="evidence" value="ECO:0000318"/>
    <property type="project" value="GO_Central"/>
</dbReference>
<dbReference type="GO" id="GO:0004620">
    <property type="term" value="F:phospholipase activity"/>
    <property type="evidence" value="ECO:0000314"/>
    <property type="project" value="dictyBase"/>
</dbReference>
<dbReference type="GO" id="GO:0046338">
    <property type="term" value="P:phosphatidylethanolamine catabolic process"/>
    <property type="evidence" value="ECO:0000314"/>
    <property type="project" value="dictyBase"/>
</dbReference>
<dbReference type="GO" id="GO:0031161">
    <property type="term" value="P:phosphatidylinositol catabolic process"/>
    <property type="evidence" value="ECO:0000314"/>
    <property type="project" value="dictyBase"/>
</dbReference>
<dbReference type="GO" id="GO:0009395">
    <property type="term" value="P:phospholipid catabolic process"/>
    <property type="evidence" value="ECO:0000314"/>
    <property type="project" value="dictyBase"/>
</dbReference>
<dbReference type="FunFam" id="3.60.60.30:FF:000001">
    <property type="entry name" value="Phospholipase B-like protein G"/>
    <property type="match status" value="1"/>
</dbReference>
<dbReference type="Gene3D" id="3.60.60.30">
    <property type="match status" value="1"/>
</dbReference>
<dbReference type="InterPro" id="IPR007000">
    <property type="entry name" value="PLipase_B-like"/>
</dbReference>
<dbReference type="PANTHER" id="PTHR12370:SF26">
    <property type="entry name" value="PHOSPHOLIPASE B-LIKE PROTEIN A"/>
    <property type="match status" value="1"/>
</dbReference>
<dbReference type="PANTHER" id="PTHR12370">
    <property type="entry name" value="PHOSPHOLIPASE B-RELATED"/>
    <property type="match status" value="1"/>
</dbReference>
<dbReference type="Pfam" id="PF04916">
    <property type="entry name" value="Phospholip_B"/>
    <property type="match status" value="1"/>
</dbReference>
<comment type="function">
    <text evidence="2">Phospholipase that removes both fatty-acid chains from phosphatidylcholine and produces the water-soluble glycerophosphorylcholine. In addition to phosphatidylcholine deacylation, it also hydrolyzes phosphatidylinositol and phosphatidylethanolamine.</text>
</comment>
<comment type="subcellular location">
    <subcellularLocation>
        <location evidence="3">Secreted</location>
    </subcellularLocation>
</comment>
<comment type="similarity">
    <text evidence="3">Belongs to the phospholipase B-like family.</text>
</comment>
<gene>
    <name type="primary">plbA</name>
    <name type="ORF">DDB_G0276767</name>
</gene>
<protein>
    <recommendedName>
        <fullName>Phospholipase B-like protein A</fullName>
        <ecNumber>3.1.1.-</ecNumber>
    </recommendedName>
</protein>
<feature type="signal peptide" evidence="1">
    <location>
        <begin position="1"/>
        <end position="20"/>
    </location>
</feature>
<feature type="chain" id="PRO_0000286117" description="Phospholipase B-like protein A">
    <location>
        <begin position="21"/>
        <end position="574"/>
    </location>
</feature>
<feature type="glycosylation site" description="N-linked (GlcNAc...) asparagine" evidence="1">
    <location>
        <position position="159"/>
    </location>
</feature>
<feature type="glycosylation site" description="N-linked (GlcNAc...) asparagine" evidence="1">
    <location>
        <position position="195"/>
    </location>
</feature>
<feature type="glycosylation site" description="N-linked (GlcNAc...) asparagine" evidence="1">
    <location>
        <position position="415"/>
    </location>
</feature>
<feature type="sequence conflict" description="In Ref. 1; AA sequence." evidence="3" ref="1">
    <original>S</original>
    <variation>Y</variation>
    <location>
        <position position="503"/>
    </location>
</feature>
<feature type="sequence conflict" description="In Ref. 1; AA sequence." evidence="3" ref="1">
    <original>D</original>
    <variation>E</variation>
    <location>
        <position position="505"/>
    </location>
</feature>
<feature type="sequence conflict" description="In Ref. 1; AA sequence." evidence="3" ref="1">
    <original>V</original>
    <variation>R</variation>
    <location>
        <position position="512"/>
    </location>
</feature>
<sequence>MRVIRSLLLLTIAIIGSVLSQSSIDDGYTVFYSQPDNYYVKPGTFSNGVAQAIFSNEMMTTGWSFMSISSSEGLYPNDIIAAGAGYLEGYISQEMIYQNWMNMYNNEYHNVIGSDVENWIQENLQYLQTMIDSAPSNDLYWQNVETVLTQITYMQRGYNQSVIDNGVDASQSLGITEFFLMNMDGDMIDLGPALNLTNGKQVTSPATATSPKQAFKEFMRRTGHCSALIKMTDDLSDLFSGHTTWSSYYEMVRMFKVYNLKYLFNGQPPASKVTMFSGYPGTLSSIDDFYLLDTKIVVIETTNGLMNNNLYHLITSESVLSWIRVIVANRLATGGESWCQTFSLYNSGTYNNQWIIVDYNKFIKGYGALDGTLYILEQVPDYVEYGDQTAILRTGYWPSFNIPFYENIYGLTGFNETYAQFGNWFSYQASPRSMIFKRDANNIHSLTQFQAMLRYNNWQNDPFSQGNAGNQISSRFDLVTADDPNNQYLDPDAFGGIDSKVVSADMVAALLVNAQSGPSHDNETPFTWNSQWNQKYTYAGQPTTWNFDWMTMSLQSMKPASPSSDSSSDSTTFN</sequence>
<evidence type="ECO:0000255" key="1"/>
<evidence type="ECO:0000269" key="2">
    <source>
    </source>
</evidence>
<evidence type="ECO:0000305" key="3"/>